<name>COBS_SHESA</name>
<gene>
    <name evidence="1" type="primary">cobS</name>
    <name type="ordered locus">Shewana3_3277</name>
</gene>
<comment type="function">
    <text evidence="1">Joins adenosylcobinamide-GDP and alpha-ribazole to generate adenosylcobalamin (Ado-cobalamin). Also synthesizes adenosylcobalamin 5'-phosphate from adenosylcobinamide-GDP and alpha-ribazole 5'-phosphate.</text>
</comment>
<comment type="catalytic activity">
    <reaction evidence="1">
        <text>alpha-ribazole + adenosylcob(III)inamide-GDP = adenosylcob(III)alamin + GMP + H(+)</text>
        <dbReference type="Rhea" id="RHEA:16049"/>
        <dbReference type="ChEBI" id="CHEBI:10329"/>
        <dbReference type="ChEBI" id="CHEBI:15378"/>
        <dbReference type="ChEBI" id="CHEBI:18408"/>
        <dbReference type="ChEBI" id="CHEBI:58115"/>
        <dbReference type="ChEBI" id="CHEBI:60487"/>
        <dbReference type="EC" id="2.7.8.26"/>
    </reaction>
</comment>
<comment type="catalytic activity">
    <reaction evidence="1">
        <text>alpha-ribazole 5'-phosphate + adenosylcob(III)inamide-GDP = adenosylcob(III)alamin 5'-phosphate + GMP + H(+)</text>
        <dbReference type="Rhea" id="RHEA:23560"/>
        <dbReference type="ChEBI" id="CHEBI:15378"/>
        <dbReference type="ChEBI" id="CHEBI:57918"/>
        <dbReference type="ChEBI" id="CHEBI:58115"/>
        <dbReference type="ChEBI" id="CHEBI:60487"/>
        <dbReference type="ChEBI" id="CHEBI:60493"/>
        <dbReference type="EC" id="2.7.8.26"/>
    </reaction>
</comment>
<comment type="cofactor">
    <cofactor evidence="1">
        <name>Mg(2+)</name>
        <dbReference type="ChEBI" id="CHEBI:18420"/>
    </cofactor>
</comment>
<comment type="pathway">
    <text evidence="1">Cofactor biosynthesis; adenosylcobalamin biosynthesis; adenosylcobalamin from cob(II)yrinate a,c-diamide: step 7/7.</text>
</comment>
<comment type="subcellular location">
    <subcellularLocation>
        <location evidence="1">Cell inner membrane</location>
        <topology evidence="1">Multi-pass membrane protein</topology>
    </subcellularLocation>
</comment>
<comment type="similarity">
    <text evidence="1">Belongs to the CobS family.</text>
</comment>
<dbReference type="EC" id="2.7.8.26" evidence="1"/>
<dbReference type="EMBL" id="CP000469">
    <property type="protein sequence ID" value="ABK49501.1"/>
    <property type="molecule type" value="Genomic_DNA"/>
</dbReference>
<dbReference type="RefSeq" id="WP_011621638.1">
    <property type="nucleotide sequence ID" value="NC_008577.1"/>
</dbReference>
<dbReference type="STRING" id="94122.Shewana3_3277"/>
<dbReference type="KEGG" id="shn:Shewana3_3277"/>
<dbReference type="eggNOG" id="COG0368">
    <property type="taxonomic scope" value="Bacteria"/>
</dbReference>
<dbReference type="HOGENOM" id="CLU_057426_1_1_6"/>
<dbReference type="OrthoDB" id="9794626at2"/>
<dbReference type="UniPathway" id="UPA00148">
    <property type="reaction ID" value="UER00238"/>
</dbReference>
<dbReference type="Proteomes" id="UP000002589">
    <property type="component" value="Chromosome"/>
</dbReference>
<dbReference type="GO" id="GO:0005886">
    <property type="term" value="C:plasma membrane"/>
    <property type="evidence" value="ECO:0007669"/>
    <property type="project" value="UniProtKB-SubCell"/>
</dbReference>
<dbReference type="GO" id="GO:0051073">
    <property type="term" value="F:adenosylcobinamide-GDP ribazoletransferase activity"/>
    <property type="evidence" value="ECO:0007669"/>
    <property type="project" value="UniProtKB-UniRule"/>
</dbReference>
<dbReference type="GO" id="GO:0008818">
    <property type="term" value="F:cobalamin 5'-phosphate synthase activity"/>
    <property type="evidence" value="ECO:0007669"/>
    <property type="project" value="UniProtKB-UniRule"/>
</dbReference>
<dbReference type="GO" id="GO:0009236">
    <property type="term" value="P:cobalamin biosynthetic process"/>
    <property type="evidence" value="ECO:0007669"/>
    <property type="project" value="UniProtKB-UniRule"/>
</dbReference>
<dbReference type="HAMAP" id="MF_00719">
    <property type="entry name" value="CobS"/>
    <property type="match status" value="1"/>
</dbReference>
<dbReference type="InterPro" id="IPR003805">
    <property type="entry name" value="CobS"/>
</dbReference>
<dbReference type="NCBIfam" id="TIGR00317">
    <property type="entry name" value="cobS"/>
    <property type="match status" value="1"/>
</dbReference>
<dbReference type="NCBIfam" id="NF001277">
    <property type="entry name" value="PRK00235.1-3"/>
    <property type="match status" value="1"/>
</dbReference>
<dbReference type="PANTHER" id="PTHR34148">
    <property type="entry name" value="ADENOSYLCOBINAMIDE-GDP RIBAZOLETRANSFERASE"/>
    <property type="match status" value="1"/>
</dbReference>
<dbReference type="PANTHER" id="PTHR34148:SF1">
    <property type="entry name" value="ADENOSYLCOBINAMIDE-GDP RIBAZOLETRANSFERASE"/>
    <property type="match status" value="1"/>
</dbReference>
<dbReference type="Pfam" id="PF02654">
    <property type="entry name" value="CobS"/>
    <property type="match status" value="1"/>
</dbReference>
<protein>
    <recommendedName>
        <fullName evidence="1">Adenosylcobinamide-GDP ribazoletransferase</fullName>
        <ecNumber evidence="1">2.7.8.26</ecNumber>
    </recommendedName>
    <alternativeName>
        <fullName evidence="1">Cobalamin synthase</fullName>
    </alternativeName>
    <alternativeName>
        <fullName evidence="1">Cobalamin-5'-phosphate synthase</fullName>
    </alternativeName>
</protein>
<proteinExistence type="inferred from homology"/>
<keyword id="KW-0997">Cell inner membrane</keyword>
<keyword id="KW-1003">Cell membrane</keyword>
<keyword id="KW-0169">Cobalamin biosynthesis</keyword>
<keyword id="KW-0460">Magnesium</keyword>
<keyword id="KW-0472">Membrane</keyword>
<keyword id="KW-0808">Transferase</keyword>
<keyword id="KW-0812">Transmembrane</keyword>
<keyword id="KW-1133">Transmembrane helix</keyword>
<reference key="1">
    <citation type="submission" date="2006-09" db="EMBL/GenBank/DDBJ databases">
        <title>Complete sequence of chromosome 1 of Shewanella sp. ANA-3.</title>
        <authorList>
            <person name="Copeland A."/>
            <person name="Lucas S."/>
            <person name="Lapidus A."/>
            <person name="Barry K."/>
            <person name="Detter J.C."/>
            <person name="Glavina del Rio T."/>
            <person name="Hammon N."/>
            <person name="Israni S."/>
            <person name="Dalin E."/>
            <person name="Tice H."/>
            <person name="Pitluck S."/>
            <person name="Chertkov O."/>
            <person name="Brettin T."/>
            <person name="Bruce D."/>
            <person name="Han C."/>
            <person name="Tapia R."/>
            <person name="Gilna P."/>
            <person name="Schmutz J."/>
            <person name="Larimer F."/>
            <person name="Land M."/>
            <person name="Hauser L."/>
            <person name="Kyrpides N."/>
            <person name="Kim E."/>
            <person name="Newman D."/>
            <person name="Salticov C."/>
            <person name="Konstantinidis K."/>
            <person name="Klappenback J."/>
            <person name="Tiedje J."/>
            <person name="Richardson P."/>
        </authorList>
    </citation>
    <scope>NUCLEOTIDE SEQUENCE [LARGE SCALE GENOMIC DNA]</scope>
    <source>
        <strain>ANA-3</strain>
    </source>
</reference>
<feature type="chain" id="PRO_1000045807" description="Adenosylcobinamide-GDP ribazoletransferase">
    <location>
        <begin position="1"/>
        <end position="262"/>
    </location>
</feature>
<feature type="transmembrane region" description="Helical" evidence="1">
    <location>
        <begin position="43"/>
        <end position="63"/>
    </location>
</feature>
<feature type="transmembrane region" description="Helical" evidence="1">
    <location>
        <begin position="66"/>
        <end position="86"/>
    </location>
</feature>
<feature type="transmembrane region" description="Helical" evidence="1">
    <location>
        <begin position="120"/>
        <end position="140"/>
    </location>
</feature>
<feature type="transmembrane region" description="Helical" evidence="1">
    <location>
        <begin position="146"/>
        <end position="166"/>
    </location>
</feature>
<feature type="transmembrane region" description="Helical" evidence="1">
    <location>
        <begin position="191"/>
        <end position="211"/>
    </location>
</feature>
<feature type="transmembrane region" description="Helical" evidence="1">
    <location>
        <begin position="242"/>
        <end position="262"/>
    </location>
</feature>
<evidence type="ECO:0000255" key="1">
    <source>
        <dbReference type="HAMAP-Rule" id="MF_00719"/>
    </source>
</evidence>
<sequence>MSERESWHKEIDLFLVAMGYFTRIPMPKWVEVDADKLNKASRYFGLVGLLVGLLSAIVFWLTQNWLPAGVSVLLSMVTGVLLTGGFHEDGLADTFDGFGGGWTAEDKLRIMKDSRLGSYGALALMLVLMLKWQLLVELALYDPVVAGSAMIVAHTVSRVVAASLIFTEKYVRDDESSKSKPLAQHQGINELFILIASGVLVLLVLKGIAALSLLLVMIGLRRLIVVIFRRQIGGYTGDTLGAAQQICEIVCYFVLLVVGSIL</sequence>
<organism>
    <name type="scientific">Shewanella sp. (strain ANA-3)</name>
    <dbReference type="NCBI Taxonomy" id="94122"/>
    <lineage>
        <taxon>Bacteria</taxon>
        <taxon>Pseudomonadati</taxon>
        <taxon>Pseudomonadota</taxon>
        <taxon>Gammaproteobacteria</taxon>
        <taxon>Alteromonadales</taxon>
        <taxon>Shewanellaceae</taxon>
        <taxon>Shewanella</taxon>
    </lineage>
</organism>
<accession>A0L0D2</accession>